<organism>
    <name type="scientific">Arabidopsis thaliana</name>
    <name type="common">Mouse-ear cress</name>
    <dbReference type="NCBI Taxonomy" id="3702"/>
    <lineage>
        <taxon>Eukaryota</taxon>
        <taxon>Viridiplantae</taxon>
        <taxon>Streptophyta</taxon>
        <taxon>Embryophyta</taxon>
        <taxon>Tracheophyta</taxon>
        <taxon>Spermatophyta</taxon>
        <taxon>Magnoliopsida</taxon>
        <taxon>eudicotyledons</taxon>
        <taxon>Gunneridae</taxon>
        <taxon>Pentapetalae</taxon>
        <taxon>rosids</taxon>
        <taxon>malvids</taxon>
        <taxon>Brassicales</taxon>
        <taxon>Brassicaceae</taxon>
        <taxon>Camelineae</taxon>
        <taxon>Arabidopsis</taxon>
    </lineage>
</organism>
<feature type="chain" id="PRO_0000210068" description="MLP-like protein 28">
    <location>
        <begin position="1"/>
        <end position="335"/>
    </location>
</feature>
<feature type="strand" evidence="3">
    <location>
        <begin position="20"/>
        <end position="34"/>
    </location>
</feature>
<feature type="helix" evidence="3">
    <location>
        <begin position="36"/>
        <end position="40"/>
    </location>
</feature>
<feature type="helix" evidence="3">
    <location>
        <begin position="41"/>
        <end position="43"/>
    </location>
</feature>
<feature type="strand" evidence="3">
    <location>
        <begin position="76"/>
        <end position="81"/>
    </location>
</feature>
<feature type="strand" evidence="3">
    <location>
        <begin position="84"/>
        <end position="96"/>
    </location>
</feature>
<feature type="turn" evidence="3">
    <location>
        <begin position="97"/>
        <end position="100"/>
    </location>
</feature>
<feature type="strand" evidence="3">
    <location>
        <begin position="101"/>
        <end position="106"/>
    </location>
</feature>
<feature type="helix" evidence="3">
    <location>
        <begin position="111"/>
        <end position="113"/>
    </location>
</feature>
<feature type="strand" evidence="3">
    <location>
        <begin position="115"/>
        <end position="129"/>
    </location>
</feature>
<feature type="strand" evidence="3">
    <location>
        <begin position="132"/>
        <end position="145"/>
    </location>
</feature>
<feature type="turn" evidence="3">
    <location>
        <begin position="146"/>
        <end position="148"/>
    </location>
</feature>
<feature type="helix" evidence="3">
    <location>
        <begin position="152"/>
        <end position="170"/>
    </location>
</feature>
<reference key="1">
    <citation type="submission" date="2001-01" db="EMBL/GenBank/DDBJ databases">
        <title>Molecular and phylogenetic analysis of a gene family in Arabidopsis thaliana with similarities to major latex, pathogenesis-related and ripening-induced proteins.</title>
        <authorList>
            <person name="Muller S."/>
            <person name="Klimt S."/>
            <person name="Hauser M.T."/>
        </authorList>
    </citation>
    <scope>NUCLEOTIDE SEQUENCE [GENOMIC DNA]</scope>
    <source>
        <strain>cv. Columbia</strain>
    </source>
</reference>
<reference key="2">
    <citation type="journal article" date="2000" name="Nature">
        <title>Sequence and analysis of chromosome 1 of the plant Arabidopsis thaliana.</title>
        <authorList>
            <person name="Theologis A."/>
            <person name="Ecker J.R."/>
            <person name="Palm C.J."/>
            <person name="Federspiel N.A."/>
            <person name="Kaul S."/>
            <person name="White O."/>
            <person name="Alonso J."/>
            <person name="Altafi H."/>
            <person name="Araujo R."/>
            <person name="Bowman C.L."/>
            <person name="Brooks S.Y."/>
            <person name="Buehler E."/>
            <person name="Chan A."/>
            <person name="Chao Q."/>
            <person name="Chen H."/>
            <person name="Cheuk R.F."/>
            <person name="Chin C.W."/>
            <person name="Chung M.K."/>
            <person name="Conn L."/>
            <person name="Conway A.B."/>
            <person name="Conway A.R."/>
            <person name="Creasy T.H."/>
            <person name="Dewar K."/>
            <person name="Dunn P."/>
            <person name="Etgu P."/>
            <person name="Feldblyum T.V."/>
            <person name="Feng J.-D."/>
            <person name="Fong B."/>
            <person name="Fujii C.Y."/>
            <person name="Gill J.E."/>
            <person name="Goldsmith A.D."/>
            <person name="Haas B."/>
            <person name="Hansen N.F."/>
            <person name="Hughes B."/>
            <person name="Huizar L."/>
            <person name="Hunter J.L."/>
            <person name="Jenkins J."/>
            <person name="Johnson-Hopson C."/>
            <person name="Khan S."/>
            <person name="Khaykin E."/>
            <person name="Kim C.J."/>
            <person name="Koo H.L."/>
            <person name="Kremenetskaia I."/>
            <person name="Kurtz D.B."/>
            <person name="Kwan A."/>
            <person name="Lam B."/>
            <person name="Langin-Hooper S."/>
            <person name="Lee A."/>
            <person name="Lee J.M."/>
            <person name="Lenz C.A."/>
            <person name="Li J.H."/>
            <person name="Li Y.-P."/>
            <person name="Lin X."/>
            <person name="Liu S.X."/>
            <person name="Liu Z.A."/>
            <person name="Luros J.S."/>
            <person name="Maiti R."/>
            <person name="Marziali A."/>
            <person name="Militscher J."/>
            <person name="Miranda M."/>
            <person name="Nguyen M."/>
            <person name="Nierman W.C."/>
            <person name="Osborne B.I."/>
            <person name="Pai G."/>
            <person name="Peterson J."/>
            <person name="Pham P.K."/>
            <person name="Rizzo M."/>
            <person name="Rooney T."/>
            <person name="Rowley D."/>
            <person name="Sakano H."/>
            <person name="Salzberg S.L."/>
            <person name="Schwartz J.R."/>
            <person name="Shinn P."/>
            <person name="Southwick A.M."/>
            <person name="Sun H."/>
            <person name="Tallon L.J."/>
            <person name="Tambunga G."/>
            <person name="Toriumi M.J."/>
            <person name="Town C.D."/>
            <person name="Utterback T."/>
            <person name="Van Aken S."/>
            <person name="Vaysberg M."/>
            <person name="Vysotskaia V.S."/>
            <person name="Walker M."/>
            <person name="Wu D."/>
            <person name="Yu G."/>
            <person name="Fraser C.M."/>
            <person name="Venter J.C."/>
            <person name="Davis R.W."/>
        </authorList>
    </citation>
    <scope>NUCLEOTIDE SEQUENCE [LARGE SCALE GENOMIC DNA]</scope>
    <source>
        <strain>cv. Columbia</strain>
    </source>
</reference>
<reference key="3">
    <citation type="journal article" date="2017" name="Plant J.">
        <title>Araport11: a complete reannotation of the Arabidopsis thaliana reference genome.</title>
        <authorList>
            <person name="Cheng C.Y."/>
            <person name="Krishnakumar V."/>
            <person name="Chan A.P."/>
            <person name="Thibaud-Nissen F."/>
            <person name="Schobel S."/>
            <person name="Town C.D."/>
        </authorList>
    </citation>
    <scope>GENOME REANNOTATION</scope>
    <source>
        <strain>cv. Columbia</strain>
    </source>
</reference>
<reference key="4">
    <citation type="journal article" date="2003" name="Science">
        <title>Empirical analysis of transcriptional activity in the Arabidopsis genome.</title>
        <authorList>
            <person name="Yamada K."/>
            <person name="Lim J."/>
            <person name="Dale J.M."/>
            <person name="Chen H."/>
            <person name="Shinn P."/>
            <person name="Palm C.J."/>
            <person name="Southwick A.M."/>
            <person name="Wu H.C."/>
            <person name="Kim C.J."/>
            <person name="Nguyen M."/>
            <person name="Pham P.K."/>
            <person name="Cheuk R.F."/>
            <person name="Karlin-Newmann G."/>
            <person name="Liu S.X."/>
            <person name="Lam B."/>
            <person name="Sakano H."/>
            <person name="Wu T."/>
            <person name="Yu G."/>
            <person name="Miranda M."/>
            <person name="Quach H.L."/>
            <person name="Tripp M."/>
            <person name="Chang C.H."/>
            <person name="Lee J.M."/>
            <person name="Toriumi M.J."/>
            <person name="Chan M.M."/>
            <person name="Tang C.C."/>
            <person name="Onodera C.S."/>
            <person name="Deng J.M."/>
            <person name="Akiyama K."/>
            <person name="Ansari Y."/>
            <person name="Arakawa T."/>
            <person name="Banh J."/>
            <person name="Banno F."/>
            <person name="Bowser L."/>
            <person name="Brooks S.Y."/>
            <person name="Carninci P."/>
            <person name="Chao Q."/>
            <person name="Choy N."/>
            <person name="Enju A."/>
            <person name="Goldsmith A.D."/>
            <person name="Gurjal M."/>
            <person name="Hansen N.F."/>
            <person name="Hayashizaki Y."/>
            <person name="Johnson-Hopson C."/>
            <person name="Hsuan V.W."/>
            <person name="Iida K."/>
            <person name="Karnes M."/>
            <person name="Khan S."/>
            <person name="Koesema E."/>
            <person name="Ishida J."/>
            <person name="Jiang P.X."/>
            <person name="Jones T."/>
            <person name="Kawai J."/>
            <person name="Kamiya A."/>
            <person name="Meyers C."/>
            <person name="Nakajima M."/>
            <person name="Narusaka M."/>
            <person name="Seki M."/>
            <person name="Sakurai T."/>
            <person name="Satou M."/>
            <person name="Tamse R."/>
            <person name="Vaysberg M."/>
            <person name="Wallender E.K."/>
            <person name="Wong C."/>
            <person name="Yamamura Y."/>
            <person name="Yuan S."/>
            <person name="Shinozaki K."/>
            <person name="Davis R.W."/>
            <person name="Theologis A."/>
            <person name="Ecker J.R."/>
        </authorList>
    </citation>
    <scope>NUCLEOTIDE SEQUENCE [LARGE SCALE MRNA]</scope>
    <source>
        <strain>cv. Columbia</strain>
    </source>
</reference>
<reference key="5">
    <citation type="journal article" date="2009" name="Proteins">
        <title>Structures of two Arabidopsis thaliana major latex proteins represent novel helix-grip folds.</title>
        <authorList>
            <person name="Lytle B.L."/>
            <person name="Song J."/>
            <person name="de la Cruz N.B."/>
            <person name="Peterson F.C."/>
            <person name="Johnson K.A."/>
            <person name="Bingman C.A."/>
            <person name="Phillips G.N. Jr."/>
            <person name="Volkman B.F."/>
        </authorList>
    </citation>
    <scope>STRUCTURE BY NMR OF 17-173</scope>
    <scope>FUNCTION</scope>
</reference>
<protein>
    <recommendedName>
        <fullName>MLP-like protein 28</fullName>
    </recommendedName>
</protein>
<gene>
    <name type="primary">MLP28</name>
    <name type="ordered locus">At1g70830</name>
    <name type="ORF">F15H11.8</name>
</gene>
<name>MLP28_ARATH</name>
<comment type="function">
    <text evidence="1">Can bind steroids (in vitro), and may also bind other types of hydrophobic ligands.</text>
</comment>
<comment type="alternative products">
    <event type="alternative splicing"/>
    <isoform>
        <id>Q9SSK9-1</id>
        <name>1</name>
        <sequence type="displayed"/>
    </isoform>
    <text>A number of isoforms are produced. According to EST sequences.</text>
</comment>
<comment type="similarity">
    <text evidence="2">Belongs to the MLP family.</text>
</comment>
<sequence length="335" mass="37615">MADVATKHPMEDEVKKTEASSLVGKLETDVEIKASADKFHHMFAGKPHHVSKASPGNIQGCDLHEGDWGTVGSIVFWNYVHDGEAKVAKERIEAVEPDKNLITFRVIEGDLMKEYKSFLLTIQVTPKPGGPGSIVHWHLEYEKISEEVAHPETLLQFCVEVSKEIDEHLLAEEEEVKTPETPSLVGKLETDVEIKASAEKFHHMFAGKPHHVSKASPGNIQGCDLHEGDWGQVGSIVFWNYVHDREAKVAKERIEAVEPNKNLITFRVIDGDLMKEYKSFLLTIQVTPKLGGPGSIVHWHLEYEKISEEVAHPETLLQFCVEVSKEIDEHLLAEE</sequence>
<accession>Q9SSK9</accession>
<keyword id="KW-0002">3D-structure</keyword>
<keyword id="KW-0025">Alternative splicing</keyword>
<keyword id="KW-1185">Reference proteome</keyword>
<dbReference type="EMBL" id="AJ306143">
    <property type="protein sequence ID" value="CAC83581.1"/>
    <property type="molecule type" value="Genomic_DNA"/>
</dbReference>
<dbReference type="EMBL" id="AC008148">
    <property type="protein sequence ID" value="AAD55498.1"/>
    <property type="molecule type" value="Genomic_DNA"/>
</dbReference>
<dbReference type="EMBL" id="CP002684">
    <property type="protein sequence ID" value="AEE35122.1"/>
    <property type="molecule type" value="Genomic_DNA"/>
</dbReference>
<dbReference type="EMBL" id="AY070107">
    <property type="protein sequence ID" value="AAL49844.1"/>
    <property type="molecule type" value="mRNA"/>
</dbReference>
<dbReference type="EMBL" id="AY102107">
    <property type="protein sequence ID" value="AAM26677.1"/>
    <property type="molecule type" value="mRNA"/>
</dbReference>
<dbReference type="EMBL" id="AY123016">
    <property type="protein sequence ID" value="AAM67549.1"/>
    <property type="molecule type" value="mRNA"/>
</dbReference>
<dbReference type="EMBL" id="BT000581">
    <property type="protein sequence ID" value="AAN18150.1"/>
    <property type="molecule type" value="mRNA"/>
</dbReference>
<dbReference type="PIR" id="A96733">
    <property type="entry name" value="A96733"/>
</dbReference>
<dbReference type="RefSeq" id="NP_849875.1">
    <molecule id="Q9SSK9-1"/>
    <property type="nucleotide sequence ID" value="NM_179544.2"/>
</dbReference>
<dbReference type="PDB" id="2I9Y">
    <property type="method" value="NMR"/>
    <property type="chains" value="A=17-173"/>
</dbReference>
<dbReference type="PDBsum" id="2I9Y"/>
<dbReference type="SMR" id="Q9SSK9"/>
<dbReference type="BioGRID" id="28640">
    <property type="interactions" value="4"/>
</dbReference>
<dbReference type="FunCoup" id="Q9SSK9">
    <property type="interactions" value="29"/>
</dbReference>
<dbReference type="IntAct" id="Q9SSK9">
    <property type="interactions" value="2"/>
</dbReference>
<dbReference type="STRING" id="3702.Q9SSK9"/>
<dbReference type="iPTMnet" id="Q9SSK9"/>
<dbReference type="PaxDb" id="3702-AT1G70830.1"/>
<dbReference type="ProteomicsDB" id="251414">
    <molecule id="Q9SSK9-1"/>
</dbReference>
<dbReference type="DNASU" id="843420"/>
<dbReference type="EnsemblPlants" id="AT1G70830.1">
    <molecule id="Q9SSK9-1"/>
    <property type="protein sequence ID" value="AT1G70830.1"/>
    <property type="gene ID" value="AT1G70830"/>
</dbReference>
<dbReference type="GeneID" id="843420"/>
<dbReference type="Gramene" id="AT1G70830.1">
    <molecule id="Q9SSK9-1"/>
    <property type="protein sequence ID" value="AT1G70830.1"/>
    <property type="gene ID" value="AT1G70830"/>
</dbReference>
<dbReference type="KEGG" id="ath:AT1G70830"/>
<dbReference type="Araport" id="AT1G70830"/>
<dbReference type="TAIR" id="AT1G70830">
    <property type="gene designation" value="MLP28"/>
</dbReference>
<dbReference type="eggNOG" id="ENOG502RN75">
    <property type="taxonomic scope" value="Eukaryota"/>
</dbReference>
<dbReference type="InParanoid" id="Q9SSK9"/>
<dbReference type="PhylomeDB" id="Q9SSK9"/>
<dbReference type="EvolutionaryTrace" id="Q9SSK9"/>
<dbReference type="PRO" id="PR:Q9SSK9"/>
<dbReference type="Proteomes" id="UP000006548">
    <property type="component" value="Chromosome 1"/>
</dbReference>
<dbReference type="ExpressionAtlas" id="Q9SSK9">
    <property type="expression patterns" value="baseline and differential"/>
</dbReference>
<dbReference type="GO" id="GO:0005829">
    <property type="term" value="C:cytosol"/>
    <property type="evidence" value="ECO:0007005"/>
    <property type="project" value="TAIR"/>
</dbReference>
<dbReference type="GO" id="GO:0005739">
    <property type="term" value="C:mitochondrion"/>
    <property type="evidence" value="ECO:0007005"/>
    <property type="project" value="TAIR"/>
</dbReference>
<dbReference type="GO" id="GO:0006952">
    <property type="term" value="P:defense response"/>
    <property type="evidence" value="ECO:0007669"/>
    <property type="project" value="InterPro"/>
</dbReference>
<dbReference type="CDD" id="cd07816">
    <property type="entry name" value="Bet_v1-like"/>
    <property type="match status" value="2"/>
</dbReference>
<dbReference type="Gene3D" id="3.30.530.20">
    <property type="match status" value="2"/>
</dbReference>
<dbReference type="InterPro" id="IPR000916">
    <property type="entry name" value="Bet_v_I/MLP"/>
</dbReference>
<dbReference type="InterPro" id="IPR051761">
    <property type="entry name" value="MLP-like_ligand-binding"/>
</dbReference>
<dbReference type="InterPro" id="IPR023393">
    <property type="entry name" value="START-like_dom_sf"/>
</dbReference>
<dbReference type="PANTHER" id="PTHR31907">
    <property type="entry name" value="MLP-LIKE PROTEIN 423"/>
    <property type="match status" value="1"/>
</dbReference>
<dbReference type="Pfam" id="PF00407">
    <property type="entry name" value="Bet_v_1"/>
    <property type="match status" value="2"/>
</dbReference>
<dbReference type="SMART" id="SM01037">
    <property type="entry name" value="Bet_v_1"/>
    <property type="match status" value="2"/>
</dbReference>
<dbReference type="SUPFAM" id="SSF55961">
    <property type="entry name" value="Bet v1-like"/>
    <property type="match status" value="2"/>
</dbReference>
<proteinExistence type="evidence at protein level"/>
<evidence type="ECO:0000269" key="1">
    <source>
    </source>
</evidence>
<evidence type="ECO:0000305" key="2"/>
<evidence type="ECO:0007829" key="3">
    <source>
        <dbReference type="PDB" id="2I9Y"/>
    </source>
</evidence>